<dbReference type="EMBL" id="U17242">
    <property type="protein sequence ID" value="AAA64953.1"/>
    <property type="molecule type" value="Genomic_DNA"/>
</dbReference>
<dbReference type="PIR" id="T47206">
    <property type="entry name" value="T47206"/>
</dbReference>
<dbReference type="PDB" id="1O94">
    <property type="method" value="X-ray"/>
    <property type="resolution" value="2.00 A"/>
    <property type="chains" value="D/F=2-321"/>
</dbReference>
<dbReference type="PDB" id="1O95">
    <property type="method" value="X-ray"/>
    <property type="resolution" value="3.70 A"/>
    <property type="chains" value="D/F=2-321"/>
</dbReference>
<dbReference type="PDB" id="1O96">
    <property type="method" value="X-ray"/>
    <property type="resolution" value="3.10 A"/>
    <property type="chains" value="B/D/F/Z=2-321"/>
</dbReference>
<dbReference type="PDB" id="1O97">
    <property type="method" value="X-ray"/>
    <property type="resolution" value="1.60 A"/>
    <property type="chains" value="D=2-321"/>
</dbReference>
<dbReference type="PDB" id="3CLR">
    <property type="method" value="X-ray"/>
    <property type="resolution" value="1.90 A"/>
    <property type="chains" value="D=1-321"/>
</dbReference>
<dbReference type="PDB" id="3CLS">
    <property type="method" value="X-ray"/>
    <property type="resolution" value="1.65 A"/>
    <property type="chains" value="D=1-321"/>
</dbReference>
<dbReference type="PDB" id="3CLT">
    <property type="method" value="X-ray"/>
    <property type="resolution" value="2.00 A"/>
    <property type="chains" value="D=1-321"/>
</dbReference>
<dbReference type="PDB" id="3CLU">
    <property type="method" value="X-ray"/>
    <property type="resolution" value="1.80 A"/>
    <property type="chains" value="D=1-321"/>
</dbReference>
<dbReference type="PDBsum" id="1O94"/>
<dbReference type="PDBsum" id="1O95"/>
<dbReference type="PDBsum" id="1O96"/>
<dbReference type="PDBsum" id="1O97"/>
<dbReference type="PDBsum" id="3CLR"/>
<dbReference type="PDBsum" id="3CLS"/>
<dbReference type="PDBsum" id="3CLT"/>
<dbReference type="PDBsum" id="3CLU"/>
<dbReference type="SMR" id="P53571"/>
<dbReference type="MINT" id="P53571"/>
<dbReference type="STRING" id="1122236.GCA_000378225_02071"/>
<dbReference type="EvolutionaryTrace" id="P53571"/>
<dbReference type="GO" id="GO:0009055">
    <property type="term" value="F:electron transfer activity"/>
    <property type="evidence" value="ECO:0007669"/>
    <property type="project" value="InterPro"/>
</dbReference>
<dbReference type="GO" id="GO:0050660">
    <property type="term" value="F:flavin adenine dinucleotide binding"/>
    <property type="evidence" value="ECO:0007669"/>
    <property type="project" value="InterPro"/>
</dbReference>
<dbReference type="GO" id="GO:0033539">
    <property type="term" value="P:fatty acid beta-oxidation using acyl-CoA dehydrogenase"/>
    <property type="evidence" value="ECO:0007669"/>
    <property type="project" value="TreeGrafter"/>
</dbReference>
<dbReference type="CDD" id="cd01715">
    <property type="entry name" value="ETF_alpha"/>
    <property type="match status" value="1"/>
</dbReference>
<dbReference type="Gene3D" id="3.40.50.620">
    <property type="entry name" value="HUPs"/>
    <property type="match status" value="1"/>
</dbReference>
<dbReference type="Gene3D" id="3.40.50.1220">
    <property type="entry name" value="TPP-binding domain"/>
    <property type="match status" value="1"/>
</dbReference>
<dbReference type="InterPro" id="IPR029035">
    <property type="entry name" value="DHS-like_NAD/FAD-binding_dom"/>
</dbReference>
<dbReference type="InterPro" id="IPR014730">
    <property type="entry name" value="ETF_a/b_N"/>
</dbReference>
<dbReference type="InterPro" id="IPR001308">
    <property type="entry name" value="ETF_a/FixB"/>
</dbReference>
<dbReference type="InterPro" id="IPR033947">
    <property type="entry name" value="ETF_alpha_N"/>
</dbReference>
<dbReference type="InterPro" id="IPR014731">
    <property type="entry name" value="ETF_asu_C"/>
</dbReference>
<dbReference type="InterPro" id="IPR018206">
    <property type="entry name" value="ETF_asu_C_CS"/>
</dbReference>
<dbReference type="InterPro" id="IPR014729">
    <property type="entry name" value="Rossmann-like_a/b/a_fold"/>
</dbReference>
<dbReference type="PANTHER" id="PTHR43153">
    <property type="entry name" value="ELECTRON TRANSFER FLAVOPROTEIN ALPHA"/>
    <property type="match status" value="1"/>
</dbReference>
<dbReference type="PANTHER" id="PTHR43153:SF1">
    <property type="entry name" value="ELECTRON TRANSFER FLAVOPROTEIN SUBUNIT ALPHA, MITOCHONDRIAL"/>
    <property type="match status" value="1"/>
</dbReference>
<dbReference type="Pfam" id="PF01012">
    <property type="entry name" value="ETF"/>
    <property type="match status" value="1"/>
</dbReference>
<dbReference type="Pfam" id="PF00766">
    <property type="entry name" value="ETF_alpha"/>
    <property type="match status" value="1"/>
</dbReference>
<dbReference type="PIRSF" id="PIRSF000089">
    <property type="entry name" value="Electra_flavoP_a"/>
    <property type="match status" value="1"/>
</dbReference>
<dbReference type="SMART" id="SM00893">
    <property type="entry name" value="ETF"/>
    <property type="match status" value="1"/>
</dbReference>
<dbReference type="SUPFAM" id="SSF52402">
    <property type="entry name" value="Adenine nucleotide alpha hydrolases-like"/>
    <property type="match status" value="1"/>
</dbReference>
<dbReference type="SUPFAM" id="SSF52467">
    <property type="entry name" value="DHS-like NAD/FAD-binding domain"/>
    <property type="match status" value="1"/>
</dbReference>
<dbReference type="PROSITE" id="PS00696">
    <property type="entry name" value="ETF_ALPHA"/>
    <property type="match status" value="1"/>
</dbReference>
<keyword id="KW-0002">3D-structure</keyword>
<keyword id="KW-0903">Direct protein sequencing</keyword>
<keyword id="KW-0249">Electron transport</keyword>
<keyword id="KW-0274">FAD</keyword>
<keyword id="KW-0285">Flavoprotein</keyword>
<keyword id="KW-0813">Transport</keyword>
<proteinExistence type="evidence at protein level"/>
<sequence>MSKILVIAEHRRNDLRPVSLELIGAANGLKKSGEDKVVVAVIGSQADAFVPALSVNGVDELVVVKGSSIDFDPDVFEASVSALIAAHNPSVVLLPHSVDSLGYASSLASKTGYGFATDVYIVEYQGDELVATRGGYNQKVNVEVDFPGKSTVVLTIRPSVFKPLEGAGSPVVSNVDAPSVQSRSQNKDYVEVGGGNDIDITTVDFIMSIGRGIGEETNVEQFRELADEAGATLCCSRPIADAGWLPKSRQVGQSGKVVGSCKLYVAMGISGSIQHMAGMKHVPTIIAVNTDPGASIFTIAKYGIVADIFDIEEELKAQLAA</sequence>
<organism>
    <name type="scientific">Methylophilus methylotrophus</name>
    <name type="common">Bacterium W3A1</name>
    <dbReference type="NCBI Taxonomy" id="17"/>
    <lineage>
        <taxon>Bacteria</taxon>
        <taxon>Pseudomonadati</taxon>
        <taxon>Pseudomonadota</taxon>
        <taxon>Betaproteobacteria</taxon>
        <taxon>Nitrosomonadales</taxon>
        <taxon>Methylophilaceae</taxon>
        <taxon>Methylophilus</taxon>
    </lineage>
</organism>
<protein>
    <recommendedName>
        <fullName>Electron transfer flavoprotein subunit alpha</fullName>
        <shortName>Alpha-ETF</shortName>
    </recommendedName>
    <alternativeName>
        <fullName>Electron transfer flavoprotein large subunit</fullName>
        <shortName>ETFLS</shortName>
    </alternativeName>
</protein>
<reference key="1">
    <citation type="journal article" date="1994" name="J. Biol. Chem.">
        <title>Cloning, sequence analysis, and expression of the genes encoding the two subunits of the methylotrophic bacterium W3A1 electron transfer flavoprotein.</title>
        <authorList>
            <person name="Chen D."/>
            <person name="Swenson R.P."/>
        </authorList>
    </citation>
    <scope>NUCLEOTIDE SEQUENCE [GENOMIC DNA]</scope>
    <scope>PROTEIN SEQUENCE OF 2-33</scope>
    <scope>MASS SPECTROMETRY</scope>
    <scope>FUNCTION</scope>
    <scope>COFACTOR</scope>
</reference>
<reference evidence="4 5 6 7" key="2">
    <citation type="journal article" date="2003" name="Nat. Struct. Biol.">
        <title>Extensive conformational sampling in a ternary electron transfer complex.</title>
        <authorList>
            <person name="Leys D."/>
            <person name="Basran J."/>
            <person name="Talfournier F."/>
            <person name="Sutcliffe M.J."/>
            <person name="Scrutton N.S."/>
        </authorList>
    </citation>
    <scope>X-RAY CRYSTALLOGRAPHY (2.0 ANGSTROMS) IN COMPLEX WITH FAD AND TMADH</scope>
</reference>
<accession>P53571</accession>
<comment type="function">
    <text evidence="2 3">Heterodimeric electron transfer flavoprotein that accepts electrons from trimethylamine dehydrogenase (PubMed:7798207). It transfers the electrons to the main respiratory chain via ETF-ubiquinone oxidoreductase (ETF dehydrogenase) (Probable).</text>
</comment>
<comment type="cofactor">
    <cofactor evidence="1 2">
        <name>FAD</name>
        <dbReference type="ChEBI" id="CHEBI:57692"/>
    </cofactor>
    <text evidence="1">Binds 1 FAD per dimer.</text>
</comment>
<comment type="subunit">
    <text evidence="1 2">Heterodimer of an alpha and a beta subunit (PubMed:7798207, PubMed:12567183). Forms a ternary complex with trimethylamine dehydrogenase (PubMed:12567183).</text>
</comment>
<comment type="mass spectrometry"/>
<comment type="similarity">
    <text evidence="3">Belongs to the ETF alpha-subunit/FixB family.</text>
</comment>
<feature type="initiator methionine" description="Removed" evidence="2">
    <location>
        <position position="1"/>
    </location>
</feature>
<feature type="chain" id="PRO_0000167851" description="Electron transfer flavoprotein subunit alpha">
    <location>
        <begin position="2"/>
        <end position="321"/>
    </location>
</feature>
<feature type="binding site" evidence="1 6 8 9 11">
    <location>
        <position position="211"/>
    </location>
    <ligand>
        <name>FAD</name>
        <dbReference type="ChEBI" id="CHEBI:57692"/>
    </ligand>
</feature>
<feature type="binding site" evidence="1 6 7 8 9 10 11">
    <location>
        <position position="236"/>
    </location>
    <ligand>
        <name>FAD</name>
        <dbReference type="ChEBI" id="CHEBI:57692"/>
    </ligand>
</feature>
<feature type="binding site" evidence="1 6 7">
    <location>
        <position position="237"/>
    </location>
    <ligand>
        <name>FAD</name>
        <dbReference type="ChEBI" id="CHEBI:57692"/>
    </ligand>
</feature>
<feature type="binding site" evidence="1 8 9 10 11">
    <location>
        <position position="250"/>
    </location>
    <ligand>
        <name>FAD</name>
        <dbReference type="ChEBI" id="CHEBI:57692"/>
    </ligand>
</feature>
<feature type="binding site" evidence="1 6 7 8 9 10 11">
    <location>
        <position position="251"/>
    </location>
    <ligand>
        <name>FAD</name>
        <dbReference type="ChEBI" id="CHEBI:57692"/>
    </ligand>
</feature>
<feature type="binding site" evidence="1 6 7 8 9 10 11">
    <location>
        <position position="254"/>
    </location>
    <ligand>
        <name>FAD</name>
        <dbReference type="ChEBI" id="CHEBI:57692"/>
    </ligand>
</feature>
<feature type="binding site" evidence="8 9 10 11">
    <location>
        <position position="255"/>
    </location>
    <ligand>
        <name>FAD</name>
        <dbReference type="ChEBI" id="CHEBI:57692"/>
    </ligand>
</feature>
<feature type="binding site" evidence="1 6 7 8 9 10 11">
    <location>
        <position position="270"/>
    </location>
    <ligand>
        <name>FAD</name>
        <dbReference type="ChEBI" id="CHEBI:57692"/>
    </ligand>
</feature>
<feature type="binding site" evidence="1 6 8 9">
    <location>
        <position position="272"/>
    </location>
    <ligand>
        <name>FAD</name>
        <dbReference type="ChEBI" id="CHEBI:57692"/>
    </ligand>
</feature>
<feature type="binding site" evidence="1 6">
    <location>
        <position position="274"/>
    </location>
    <ligand>
        <name>FAD</name>
        <dbReference type="ChEBI" id="CHEBI:57692"/>
    </ligand>
</feature>
<feature type="binding site" evidence="1 6 7 8 9 10 11">
    <location>
        <position position="275"/>
    </location>
    <ligand>
        <name>FAD</name>
        <dbReference type="ChEBI" id="CHEBI:57692"/>
    </ligand>
</feature>
<feature type="binding site" evidence="1 6 7 8 9 10 11">
    <location>
        <position position="289"/>
    </location>
    <ligand>
        <name>FAD</name>
        <dbReference type="ChEBI" id="CHEBI:57692"/>
    </ligand>
</feature>
<feature type="binding site" evidence="1 6 7 8 9 10 11">
    <location>
        <position position="307"/>
    </location>
    <ligand>
        <name>FAD</name>
        <dbReference type="ChEBI" id="CHEBI:57692"/>
    </ligand>
</feature>
<feature type="binding site" evidence="1 6 7 8 9 10 11">
    <location>
        <position position="308"/>
    </location>
    <ligand>
        <name>FAD</name>
        <dbReference type="ChEBI" id="CHEBI:57692"/>
    </ligand>
</feature>
<feature type="strand" evidence="13">
    <location>
        <begin position="3"/>
        <end position="7"/>
    </location>
</feature>
<feature type="helix" evidence="13">
    <location>
        <begin position="18"/>
        <end position="29"/>
    </location>
</feature>
<feature type="strand" evidence="13">
    <location>
        <begin position="36"/>
        <end position="43"/>
    </location>
</feature>
<feature type="helix" evidence="13">
    <location>
        <begin position="46"/>
        <end position="49"/>
    </location>
</feature>
<feature type="helix" evidence="13">
    <location>
        <begin position="50"/>
        <end position="53"/>
    </location>
</feature>
<feature type="strand" evidence="13">
    <location>
        <begin position="59"/>
        <end position="65"/>
    </location>
</feature>
<feature type="helix" evidence="13">
    <location>
        <begin position="73"/>
        <end position="87"/>
    </location>
</feature>
<feature type="strand" evidence="13">
    <location>
        <begin position="90"/>
        <end position="95"/>
    </location>
</feature>
<feature type="helix" evidence="13">
    <location>
        <begin position="98"/>
        <end position="101"/>
    </location>
</feature>
<feature type="helix" evidence="13">
    <location>
        <begin position="104"/>
        <end position="109"/>
    </location>
</feature>
<feature type="strand" evidence="13">
    <location>
        <begin position="114"/>
        <end position="119"/>
    </location>
</feature>
<feature type="strand" evidence="13">
    <location>
        <begin position="121"/>
        <end position="125"/>
    </location>
</feature>
<feature type="strand" evidence="13">
    <location>
        <begin position="128"/>
        <end position="135"/>
    </location>
</feature>
<feature type="turn" evidence="13">
    <location>
        <begin position="136"/>
        <end position="139"/>
    </location>
</feature>
<feature type="strand" evidence="13">
    <location>
        <begin position="140"/>
        <end position="145"/>
    </location>
</feature>
<feature type="strand" evidence="13">
    <location>
        <begin position="152"/>
        <end position="156"/>
    </location>
</feature>
<feature type="strand" evidence="12">
    <location>
        <begin position="158"/>
        <end position="161"/>
    </location>
</feature>
<feature type="strand" evidence="13">
    <location>
        <begin position="171"/>
        <end position="176"/>
    </location>
</feature>
<feature type="strand" evidence="13">
    <location>
        <begin position="183"/>
        <end position="190"/>
    </location>
</feature>
<feature type="helix" evidence="14">
    <location>
        <begin position="200"/>
        <end position="202"/>
    </location>
</feature>
<feature type="strand" evidence="13">
    <location>
        <begin position="203"/>
        <end position="209"/>
    </location>
</feature>
<feature type="helix" evidence="13">
    <location>
        <begin position="211"/>
        <end position="213"/>
    </location>
</feature>
<feature type="helix" evidence="13">
    <location>
        <begin position="216"/>
        <end position="218"/>
    </location>
</feature>
<feature type="helix" evidence="13">
    <location>
        <begin position="219"/>
        <end position="229"/>
    </location>
</feature>
<feature type="strand" evidence="13">
    <location>
        <begin position="232"/>
        <end position="235"/>
    </location>
</feature>
<feature type="helix" evidence="13">
    <location>
        <begin position="237"/>
        <end position="241"/>
    </location>
</feature>
<feature type="helix" evidence="13">
    <location>
        <begin position="247"/>
        <end position="249"/>
    </location>
</feature>
<feature type="strand" evidence="13">
    <location>
        <begin position="250"/>
        <end position="252"/>
    </location>
</feature>
<feature type="strand" evidence="13">
    <location>
        <begin position="262"/>
        <end position="268"/>
    </location>
</feature>
<feature type="helix" evidence="13">
    <location>
        <begin position="273"/>
        <end position="279"/>
    </location>
</feature>
<feature type="strand" evidence="13">
    <location>
        <begin position="283"/>
        <end position="288"/>
    </location>
</feature>
<feature type="helix" evidence="13">
    <location>
        <begin position="295"/>
        <end position="298"/>
    </location>
</feature>
<feature type="strand" evidence="13">
    <location>
        <begin position="301"/>
        <end position="304"/>
    </location>
</feature>
<feature type="helix" evidence="13">
    <location>
        <begin position="308"/>
        <end position="318"/>
    </location>
</feature>
<evidence type="ECO:0000269" key="1">
    <source>
    </source>
</evidence>
<evidence type="ECO:0000269" key="2">
    <source>
    </source>
</evidence>
<evidence type="ECO:0000305" key="3"/>
<evidence type="ECO:0007744" key="4">
    <source>
        <dbReference type="PDB" id="1O94"/>
    </source>
</evidence>
<evidence type="ECO:0007744" key="5">
    <source>
        <dbReference type="PDB" id="1O95"/>
    </source>
</evidence>
<evidence type="ECO:0007744" key="6">
    <source>
        <dbReference type="PDB" id="1O96"/>
    </source>
</evidence>
<evidence type="ECO:0007744" key="7">
    <source>
        <dbReference type="PDB" id="1O97"/>
    </source>
</evidence>
<evidence type="ECO:0007744" key="8">
    <source>
        <dbReference type="PDB" id="3CLR"/>
    </source>
</evidence>
<evidence type="ECO:0007744" key="9">
    <source>
        <dbReference type="PDB" id="3CLS"/>
    </source>
</evidence>
<evidence type="ECO:0007744" key="10">
    <source>
        <dbReference type="PDB" id="3CLT"/>
    </source>
</evidence>
<evidence type="ECO:0007744" key="11">
    <source>
        <dbReference type="PDB" id="3CLU"/>
    </source>
</evidence>
<evidence type="ECO:0007829" key="12">
    <source>
        <dbReference type="PDB" id="1O96"/>
    </source>
</evidence>
<evidence type="ECO:0007829" key="13">
    <source>
        <dbReference type="PDB" id="1O97"/>
    </source>
</evidence>
<evidence type="ECO:0007829" key="14">
    <source>
        <dbReference type="PDB" id="3CLU"/>
    </source>
</evidence>
<gene>
    <name type="primary">etfA</name>
</gene>
<name>ETFA_METME</name>